<sequence>MFSQSLTIEQVDPDLWQAIKGEVQRQEDHIELIASENYASPAVLQAQGTVLTNKYAEGYPGKRYYGGCRYVDIVEQLAIDRLRNLFNAEYVNVQPHSGSQANAAVYLSALKPGDTLLGMSLAHGGHLTHGSAVNMSGKIFNSISYGLNPETEEIDYAELERLAHEHKPRMIVAGASSYARVIDWKAFRQIADNVGAYLFVDMAHYAGLIAAGYYPNPVGIADFVTSTTHKTLRGPRGGVIMAKPEHEKALNSAVFPQTQGGPLMHVIAAKAVAFKEASSQAFKDYQKQVIENARVMARVLQQRGLRIVSGRTDCHMFLVDLRAKNLTGREAESALEAAHITVNKNAIPNDPQKPFVTSGIRIGTPAITTRGFKEPESEELANLVADVLDAPANTAVLDQVARKAQALCTKFPVYGN</sequence>
<feature type="chain" id="PRO_0000113625" description="Serine hydroxymethyltransferase">
    <location>
        <begin position="1"/>
        <end position="416"/>
    </location>
</feature>
<feature type="binding site" evidence="1">
    <location>
        <position position="121"/>
    </location>
    <ligand>
        <name>(6S)-5,6,7,8-tetrahydrofolate</name>
        <dbReference type="ChEBI" id="CHEBI:57453"/>
    </ligand>
</feature>
<feature type="binding site" evidence="1">
    <location>
        <begin position="125"/>
        <end position="127"/>
    </location>
    <ligand>
        <name>(6S)-5,6,7,8-tetrahydrofolate</name>
        <dbReference type="ChEBI" id="CHEBI:57453"/>
    </ligand>
</feature>
<feature type="site" description="Plays an important role in substrate specificity" evidence="1">
    <location>
        <position position="229"/>
    </location>
</feature>
<feature type="modified residue" description="N6-(pyridoxal phosphate)lysine" evidence="1">
    <location>
        <position position="230"/>
    </location>
</feature>
<accession>Q82UP9</accession>
<dbReference type="EC" id="2.1.2.1" evidence="1"/>
<dbReference type="EMBL" id="AL954747">
    <property type="protein sequence ID" value="CAD85344.1"/>
    <property type="molecule type" value="Genomic_DNA"/>
</dbReference>
<dbReference type="RefSeq" id="WP_011112001.1">
    <property type="nucleotide sequence ID" value="NC_004757.1"/>
</dbReference>
<dbReference type="SMR" id="Q82UP9"/>
<dbReference type="STRING" id="228410.NE1433"/>
<dbReference type="GeneID" id="87104607"/>
<dbReference type="KEGG" id="neu:NE1433"/>
<dbReference type="eggNOG" id="COG0112">
    <property type="taxonomic scope" value="Bacteria"/>
</dbReference>
<dbReference type="HOGENOM" id="CLU_022477_2_1_4"/>
<dbReference type="OrthoDB" id="9803846at2"/>
<dbReference type="PhylomeDB" id="Q82UP9"/>
<dbReference type="UniPathway" id="UPA00193"/>
<dbReference type="UniPathway" id="UPA00288">
    <property type="reaction ID" value="UER01023"/>
</dbReference>
<dbReference type="Proteomes" id="UP000001416">
    <property type="component" value="Chromosome"/>
</dbReference>
<dbReference type="GO" id="GO:0005829">
    <property type="term" value="C:cytosol"/>
    <property type="evidence" value="ECO:0007669"/>
    <property type="project" value="TreeGrafter"/>
</dbReference>
<dbReference type="GO" id="GO:0004372">
    <property type="term" value="F:glycine hydroxymethyltransferase activity"/>
    <property type="evidence" value="ECO:0007669"/>
    <property type="project" value="UniProtKB-UniRule"/>
</dbReference>
<dbReference type="GO" id="GO:0030170">
    <property type="term" value="F:pyridoxal phosphate binding"/>
    <property type="evidence" value="ECO:0007669"/>
    <property type="project" value="UniProtKB-UniRule"/>
</dbReference>
<dbReference type="GO" id="GO:0019264">
    <property type="term" value="P:glycine biosynthetic process from serine"/>
    <property type="evidence" value="ECO:0007669"/>
    <property type="project" value="UniProtKB-UniRule"/>
</dbReference>
<dbReference type="GO" id="GO:0035999">
    <property type="term" value="P:tetrahydrofolate interconversion"/>
    <property type="evidence" value="ECO:0007669"/>
    <property type="project" value="UniProtKB-UniRule"/>
</dbReference>
<dbReference type="CDD" id="cd00378">
    <property type="entry name" value="SHMT"/>
    <property type="match status" value="1"/>
</dbReference>
<dbReference type="FunFam" id="3.40.640.10:FF:000001">
    <property type="entry name" value="Serine hydroxymethyltransferase"/>
    <property type="match status" value="1"/>
</dbReference>
<dbReference type="FunFam" id="3.90.1150.10:FF:000003">
    <property type="entry name" value="Serine hydroxymethyltransferase"/>
    <property type="match status" value="1"/>
</dbReference>
<dbReference type="Gene3D" id="3.90.1150.10">
    <property type="entry name" value="Aspartate Aminotransferase, domain 1"/>
    <property type="match status" value="1"/>
</dbReference>
<dbReference type="Gene3D" id="3.40.640.10">
    <property type="entry name" value="Type I PLP-dependent aspartate aminotransferase-like (Major domain)"/>
    <property type="match status" value="1"/>
</dbReference>
<dbReference type="HAMAP" id="MF_00051">
    <property type="entry name" value="SHMT"/>
    <property type="match status" value="1"/>
</dbReference>
<dbReference type="InterPro" id="IPR015424">
    <property type="entry name" value="PyrdxlP-dep_Trfase"/>
</dbReference>
<dbReference type="InterPro" id="IPR015421">
    <property type="entry name" value="PyrdxlP-dep_Trfase_major"/>
</dbReference>
<dbReference type="InterPro" id="IPR015422">
    <property type="entry name" value="PyrdxlP-dep_Trfase_small"/>
</dbReference>
<dbReference type="InterPro" id="IPR001085">
    <property type="entry name" value="Ser_HO-MeTrfase"/>
</dbReference>
<dbReference type="InterPro" id="IPR049943">
    <property type="entry name" value="Ser_HO-MeTrfase-like"/>
</dbReference>
<dbReference type="InterPro" id="IPR019798">
    <property type="entry name" value="Ser_HO-MeTrfase_PLP_BS"/>
</dbReference>
<dbReference type="InterPro" id="IPR039429">
    <property type="entry name" value="SHMT-like_dom"/>
</dbReference>
<dbReference type="NCBIfam" id="NF000586">
    <property type="entry name" value="PRK00011.1"/>
    <property type="match status" value="1"/>
</dbReference>
<dbReference type="PANTHER" id="PTHR11680">
    <property type="entry name" value="SERINE HYDROXYMETHYLTRANSFERASE"/>
    <property type="match status" value="1"/>
</dbReference>
<dbReference type="PANTHER" id="PTHR11680:SF50">
    <property type="entry name" value="SERINE HYDROXYMETHYLTRANSFERASE"/>
    <property type="match status" value="1"/>
</dbReference>
<dbReference type="Pfam" id="PF00464">
    <property type="entry name" value="SHMT"/>
    <property type="match status" value="1"/>
</dbReference>
<dbReference type="PIRSF" id="PIRSF000412">
    <property type="entry name" value="SHMT"/>
    <property type="match status" value="1"/>
</dbReference>
<dbReference type="SUPFAM" id="SSF53383">
    <property type="entry name" value="PLP-dependent transferases"/>
    <property type="match status" value="1"/>
</dbReference>
<dbReference type="PROSITE" id="PS00096">
    <property type="entry name" value="SHMT"/>
    <property type="match status" value="1"/>
</dbReference>
<reference key="1">
    <citation type="journal article" date="2003" name="J. Bacteriol.">
        <title>Complete genome sequence of the ammonia-oxidizing bacterium and obligate chemolithoautotroph Nitrosomonas europaea.</title>
        <authorList>
            <person name="Chain P."/>
            <person name="Lamerdin J.E."/>
            <person name="Larimer F.W."/>
            <person name="Regala W."/>
            <person name="Lao V."/>
            <person name="Land M.L."/>
            <person name="Hauser L."/>
            <person name="Hooper A.B."/>
            <person name="Klotz M.G."/>
            <person name="Norton J."/>
            <person name="Sayavedra-Soto L.A."/>
            <person name="Arciero D.M."/>
            <person name="Hommes N.G."/>
            <person name="Whittaker M.M."/>
            <person name="Arp D.J."/>
        </authorList>
    </citation>
    <scope>NUCLEOTIDE SEQUENCE [LARGE SCALE GENOMIC DNA]</scope>
    <source>
        <strain>ATCC 19718 / CIP 103999 / KCTC 2705 / NBRC 14298</strain>
    </source>
</reference>
<evidence type="ECO:0000255" key="1">
    <source>
        <dbReference type="HAMAP-Rule" id="MF_00051"/>
    </source>
</evidence>
<organism>
    <name type="scientific">Nitrosomonas europaea (strain ATCC 19718 / CIP 103999 / KCTC 2705 / NBRC 14298)</name>
    <dbReference type="NCBI Taxonomy" id="228410"/>
    <lineage>
        <taxon>Bacteria</taxon>
        <taxon>Pseudomonadati</taxon>
        <taxon>Pseudomonadota</taxon>
        <taxon>Betaproteobacteria</taxon>
        <taxon>Nitrosomonadales</taxon>
        <taxon>Nitrosomonadaceae</taxon>
        <taxon>Nitrosomonas</taxon>
    </lineage>
</organism>
<gene>
    <name evidence="1" type="primary">glyA</name>
    <name type="ordered locus">NE1433</name>
</gene>
<comment type="function">
    <text evidence="1">Catalyzes the reversible interconversion of serine and glycine with tetrahydrofolate (THF) serving as the one-carbon carrier. This reaction serves as the major source of one-carbon groups required for the biosynthesis of purines, thymidylate, methionine, and other important biomolecules. Also exhibits THF-independent aldolase activity toward beta-hydroxyamino acids, producing glycine and aldehydes, via a retro-aldol mechanism.</text>
</comment>
<comment type="catalytic activity">
    <reaction evidence="1">
        <text>(6R)-5,10-methylene-5,6,7,8-tetrahydrofolate + glycine + H2O = (6S)-5,6,7,8-tetrahydrofolate + L-serine</text>
        <dbReference type="Rhea" id="RHEA:15481"/>
        <dbReference type="ChEBI" id="CHEBI:15377"/>
        <dbReference type="ChEBI" id="CHEBI:15636"/>
        <dbReference type="ChEBI" id="CHEBI:33384"/>
        <dbReference type="ChEBI" id="CHEBI:57305"/>
        <dbReference type="ChEBI" id="CHEBI:57453"/>
        <dbReference type="EC" id="2.1.2.1"/>
    </reaction>
</comment>
<comment type="cofactor">
    <cofactor evidence="1">
        <name>pyridoxal 5'-phosphate</name>
        <dbReference type="ChEBI" id="CHEBI:597326"/>
    </cofactor>
</comment>
<comment type="pathway">
    <text evidence="1">One-carbon metabolism; tetrahydrofolate interconversion.</text>
</comment>
<comment type="pathway">
    <text evidence="1">Amino-acid biosynthesis; glycine biosynthesis; glycine from L-serine: step 1/1.</text>
</comment>
<comment type="subunit">
    <text evidence="1">Homodimer.</text>
</comment>
<comment type="subcellular location">
    <subcellularLocation>
        <location evidence="1">Cytoplasm</location>
    </subcellularLocation>
</comment>
<comment type="similarity">
    <text evidence="1">Belongs to the SHMT family.</text>
</comment>
<protein>
    <recommendedName>
        <fullName evidence="1">Serine hydroxymethyltransferase</fullName>
        <shortName evidence="1">SHMT</shortName>
        <shortName evidence="1">Serine methylase</shortName>
        <ecNumber evidence="1">2.1.2.1</ecNumber>
    </recommendedName>
</protein>
<name>GLYA_NITEU</name>
<keyword id="KW-0028">Amino-acid biosynthesis</keyword>
<keyword id="KW-0963">Cytoplasm</keyword>
<keyword id="KW-0554">One-carbon metabolism</keyword>
<keyword id="KW-0663">Pyridoxal phosphate</keyword>
<keyword id="KW-1185">Reference proteome</keyword>
<keyword id="KW-0808">Transferase</keyword>
<proteinExistence type="inferred from homology"/>